<dbReference type="EMBL" id="CP000436">
    <property type="protein sequence ID" value="ABI25916.1"/>
    <property type="molecule type" value="Genomic_DNA"/>
</dbReference>
<dbReference type="SMR" id="Q0I534"/>
<dbReference type="KEGG" id="hso:HS_1648"/>
<dbReference type="eggNOG" id="COG1281">
    <property type="taxonomic scope" value="Bacteria"/>
</dbReference>
<dbReference type="HOGENOM" id="CLU_054493_0_0_6"/>
<dbReference type="GO" id="GO:0005737">
    <property type="term" value="C:cytoplasm"/>
    <property type="evidence" value="ECO:0007669"/>
    <property type="project" value="UniProtKB-SubCell"/>
</dbReference>
<dbReference type="GO" id="GO:0044183">
    <property type="term" value="F:protein folding chaperone"/>
    <property type="evidence" value="ECO:0007669"/>
    <property type="project" value="TreeGrafter"/>
</dbReference>
<dbReference type="GO" id="GO:0051082">
    <property type="term" value="F:unfolded protein binding"/>
    <property type="evidence" value="ECO:0007669"/>
    <property type="project" value="UniProtKB-UniRule"/>
</dbReference>
<dbReference type="GO" id="GO:0042026">
    <property type="term" value="P:protein refolding"/>
    <property type="evidence" value="ECO:0007669"/>
    <property type="project" value="TreeGrafter"/>
</dbReference>
<dbReference type="CDD" id="cd00498">
    <property type="entry name" value="Hsp33"/>
    <property type="match status" value="1"/>
</dbReference>
<dbReference type="Gene3D" id="1.10.287.480">
    <property type="entry name" value="helix hairpin bin"/>
    <property type="match status" value="1"/>
</dbReference>
<dbReference type="Gene3D" id="3.55.30.10">
    <property type="entry name" value="Hsp33 domain"/>
    <property type="match status" value="1"/>
</dbReference>
<dbReference type="Gene3D" id="3.90.1280.10">
    <property type="entry name" value="HSP33 redox switch-like"/>
    <property type="match status" value="1"/>
</dbReference>
<dbReference type="HAMAP" id="MF_00117">
    <property type="entry name" value="HslO"/>
    <property type="match status" value="1"/>
</dbReference>
<dbReference type="InterPro" id="IPR000397">
    <property type="entry name" value="Heat_shock_Hsp33"/>
</dbReference>
<dbReference type="InterPro" id="IPR016154">
    <property type="entry name" value="Heat_shock_Hsp33_C"/>
</dbReference>
<dbReference type="InterPro" id="IPR016153">
    <property type="entry name" value="Heat_shock_Hsp33_N"/>
</dbReference>
<dbReference type="InterPro" id="IPR023212">
    <property type="entry name" value="Hsp33_helix_hairpin_bin_dom_sf"/>
</dbReference>
<dbReference type="NCBIfam" id="NF001033">
    <property type="entry name" value="PRK00114.1"/>
    <property type="match status" value="1"/>
</dbReference>
<dbReference type="PANTHER" id="PTHR30111">
    <property type="entry name" value="33 KDA CHAPERONIN"/>
    <property type="match status" value="1"/>
</dbReference>
<dbReference type="PANTHER" id="PTHR30111:SF1">
    <property type="entry name" value="33 KDA CHAPERONIN"/>
    <property type="match status" value="1"/>
</dbReference>
<dbReference type="Pfam" id="PF01430">
    <property type="entry name" value="HSP33"/>
    <property type="match status" value="1"/>
</dbReference>
<dbReference type="PIRSF" id="PIRSF005261">
    <property type="entry name" value="Heat_shock_Hsp33"/>
    <property type="match status" value="1"/>
</dbReference>
<dbReference type="SUPFAM" id="SSF64397">
    <property type="entry name" value="Hsp33 domain"/>
    <property type="match status" value="1"/>
</dbReference>
<dbReference type="SUPFAM" id="SSF118352">
    <property type="entry name" value="HSP33 redox switch-like"/>
    <property type="match status" value="1"/>
</dbReference>
<keyword id="KW-0143">Chaperone</keyword>
<keyword id="KW-0963">Cytoplasm</keyword>
<keyword id="KW-1015">Disulfide bond</keyword>
<keyword id="KW-0676">Redox-active center</keyword>
<keyword id="KW-0346">Stress response</keyword>
<keyword id="KW-0862">Zinc</keyword>
<evidence type="ECO:0000255" key="1">
    <source>
        <dbReference type="HAMAP-Rule" id="MF_00117"/>
    </source>
</evidence>
<reference key="1">
    <citation type="journal article" date="2007" name="J. Bacteriol.">
        <title>Complete genome sequence of Haemophilus somnus (Histophilus somni) strain 129Pt and comparison to Haemophilus ducreyi 35000HP and Haemophilus influenzae Rd.</title>
        <authorList>
            <person name="Challacombe J.F."/>
            <person name="Duncan A.J."/>
            <person name="Brettin T.S."/>
            <person name="Bruce D."/>
            <person name="Chertkov O."/>
            <person name="Detter J.C."/>
            <person name="Han C.S."/>
            <person name="Misra M."/>
            <person name="Richardson P."/>
            <person name="Tapia R."/>
            <person name="Thayer N."/>
            <person name="Xie G."/>
            <person name="Inzana T.J."/>
        </authorList>
    </citation>
    <scope>NUCLEOTIDE SEQUENCE [LARGE SCALE GENOMIC DNA]</scope>
    <source>
        <strain>129Pt</strain>
    </source>
</reference>
<proteinExistence type="inferred from homology"/>
<accession>Q0I534</accession>
<name>HSLO_HISS1</name>
<protein>
    <recommendedName>
        <fullName evidence="1">33 kDa chaperonin</fullName>
    </recommendedName>
    <alternativeName>
        <fullName evidence="1">Heat shock protein 33 homolog</fullName>
        <shortName evidence="1">HSP33</shortName>
    </alternativeName>
</protein>
<feature type="chain" id="PRO_1000015544" description="33 kDa chaperonin">
    <location>
        <begin position="1"/>
        <end position="286"/>
    </location>
</feature>
<feature type="disulfide bond" description="Redox-active" evidence="1">
    <location>
        <begin position="233"/>
        <end position="235"/>
    </location>
</feature>
<feature type="disulfide bond" description="Redox-active" evidence="1">
    <location>
        <begin position="267"/>
        <end position="270"/>
    </location>
</feature>
<comment type="function">
    <text evidence="1">Redox regulated molecular chaperone. Protects both thermally unfolding and oxidatively damaged proteins from irreversible aggregation. Plays an important role in the bacterial defense system toward oxidative stress.</text>
</comment>
<comment type="subcellular location">
    <subcellularLocation>
        <location evidence="1">Cytoplasm</location>
    </subcellularLocation>
</comment>
<comment type="PTM">
    <text evidence="1">Under oxidizing conditions two disulfide bonds are formed involving the reactive cysteines. Under reducing conditions zinc is bound to the reactive cysteines and the protein is inactive.</text>
</comment>
<comment type="similarity">
    <text evidence="1">Belongs to the HSP33 family.</text>
</comment>
<organism>
    <name type="scientific">Histophilus somni (strain 129Pt)</name>
    <name type="common">Haemophilus somnus</name>
    <dbReference type="NCBI Taxonomy" id="205914"/>
    <lineage>
        <taxon>Bacteria</taxon>
        <taxon>Pseudomonadati</taxon>
        <taxon>Pseudomonadota</taxon>
        <taxon>Gammaproteobacteria</taxon>
        <taxon>Pasteurellales</taxon>
        <taxon>Pasteurellaceae</taxon>
        <taxon>Histophilus</taxon>
    </lineage>
</organism>
<gene>
    <name evidence="1" type="primary">hslO</name>
    <name type="ordered locus">HS_1648</name>
</gene>
<sequence length="286" mass="32151">MIYQTDNDKLYRYLFKDRAVRGEWVRLNKTFTDTLNSHEYPRIVRNLLGEMMVATNLLTATLKFKGNITIQIQGNGPLKLLLVNGSDSQQIRALARLQDDVYDDMTLSELVGNGILVITIAPTNGERYQGVIALDKPTIAECLEDYFIRSEQLQTQLLIRSGEYEGKPVAAGLLLQIMPDGTGSQEDFEHLATLAATVKDEELFGLTAENLLYRLYHEETVEIYPPSAVEFHCGCSLERSGSALLLISDDEIENILTEHGGSIDMQCECCGTHYFFDKKTIEKLKA</sequence>